<organism>
    <name type="scientific">Rattus norvegicus</name>
    <name type="common">Rat</name>
    <dbReference type="NCBI Taxonomy" id="10116"/>
    <lineage>
        <taxon>Eukaryota</taxon>
        <taxon>Metazoa</taxon>
        <taxon>Chordata</taxon>
        <taxon>Craniata</taxon>
        <taxon>Vertebrata</taxon>
        <taxon>Euteleostomi</taxon>
        <taxon>Mammalia</taxon>
        <taxon>Eutheria</taxon>
        <taxon>Euarchontoglires</taxon>
        <taxon>Glires</taxon>
        <taxon>Rodentia</taxon>
        <taxon>Myomorpha</taxon>
        <taxon>Muroidea</taxon>
        <taxon>Muridae</taxon>
        <taxon>Murinae</taxon>
        <taxon>Rattus</taxon>
    </lineage>
</organism>
<dbReference type="EC" id="3.1.-.-" evidence="3"/>
<dbReference type="EMBL" id="AC128859">
    <property type="status" value="NOT_ANNOTATED_CDS"/>
    <property type="molecule type" value="Genomic_DNA"/>
</dbReference>
<dbReference type="EMBL" id="BC085777">
    <property type="protein sequence ID" value="AAH85777.1"/>
    <property type="molecule type" value="mRNA"/>
</dbReference>
<dbReference type="RefSeq" id="NP_001013992.1">
    <property type="nucleotide sequence ID" value="NM_001013970.1"/>
</dbReference>
<dbReference type="RefSeq" id="XP_006247061.1">
    <property type="nucleotide sequence ID" value="XM_006246999.3"/>
</dbReference>
<dbReference type="RefSeq" id="XP_008766251.1">
    <property type="nucleotide sequence ID" value="XM_008768029.2"/>
</dbReference>
<dbReference type="RefSeq" id="XP_008766252.1">
    <property type="nucleotide sequence ID" value="XM_008768030.1"/>
</dbReference>
<dbReference type="RefSeq" id="XP_008766253.1">
    <property type="nucleotide sequence ID" value="XM_008768031.2"/>
</dbReference>
<dbReference type="RefSeq" id="XP_008766254.1">
    <property type="nucleotide sequence ID" value="XM_008768032.2"/>
</dbReference>
<dbReference type="PDB" id="5YD0">
    <property type="method" value="X-ray"/>
    <property type="resolution" value="3.18 A"/>
    <property type="chains" value="A/B/C/D=14-353"/>
</dbReference>
<dbReference type="PDBsum" id="5YD0"/>
<dbReference type="SMR" id="Q5U311"/>
<dbReference type="FunCoup" id="Q5U311">
    <property type="interactions" value="209"/>
</dbReference>
<dbReference type="STRING" id="10116.ENSRNOP00000052816"/>
<dbReference type="PhosphoSitePlus" id="Q5U311"/>
<dbReference type="jPOST" id="Q5U311"/>
<dbReference type="PaxDb" id="10116-ENSRNOP00000067903"/>
<dbReference type="Ensembl" id="ENSRNOT00000076618.3">
    <property type="protein sequence ID" value="ENSRNOP00000067903.1"/>
    <property type="gene ID" value="ENSRNOG00000021412.7"/>
</dbReference>
<dbReference type="GeneID" id="303378"/>
<dbReference type="KEGG" id="rno:303378"/>
<dbReference type="AGR" id="RGD:1359139"/>
<dbReference type="CTD" id="237886"/>
<dbReference type="RGD" id="1359139">
    <property type="gene designation" value="Slfn13"/>
</dbReference>
<dbReference type="eggNOG" id="ENOG502QWKG">
    <property type="taxonomic scope" value="Eukaryota"/>
</dbReference>
<dbReference type="GeneTree" id="ENSGT00410000025651"/>
<dbReference type="HOGENOM" id="CLU_1536072_0_0_1"/>
<dbReference type="InParanoid" id="Q5U311"/>
<dbReference type="OrthoDB" id="6052143at2759"/>
<dbReference type="PhylomeDB" id="Q5U311"/>
<dbReference type="TreeFam" id="TF337168"/>
<dbReference type="PRO" id="PR:Q5U311"/>
<dbReference type="Proteomes" id="UP000002494">
    <property type="component" value="Chromosome 10"/>
</dbReference>
<dbReference type="Bgee" id="ENSRNOG00000021412">
    <property type="expression patterns" value="Expressed in spleen and 18 other cell types or tissues"/>
</dbReference>
<dbReference type="GO" id="GO:0005737">
    <property type="term" value="C:cytoplasm"/>
    <property type="evidence" value="ECO:0000250"/>
    <property type="project" value="UniProtKB"/>
</dbReference>
<dbReference type="GO" id="GO:0005634">
    <property type="term" value="C:nucleus"/>
    <property type="evidence" value="ECO:0000266"/>
    <property type="project" value="RGD"/>
</dbReference>
<dbReference type="GO" id="GO:0090734">
    <property type="term" value="C:site of DNA damage"/>
    <property type="evidence" value="ECO:0000266"/>
    <property type="project" value="RGD"/>
</dbReference>
<dbReference type="GO" id="GO:0005524">
    <property type="term" value="F:ATP binding"/>
    <property type="evidence" value="ECO:0007669"/>
    <property type="project" value="UniProtKB-KW"/>
</dbReference>
<dbReference type="GO" id="GO:0016887">
    <property type="term" value="F:ATP hydrolysis activity"/>
    <property type="evidence" value="ECO:0000266"/>
    <property type="project" value="RGD"/>
</dbReference>
<dbReference type="GO" id="GO:0004521">
    <property type="term" value="F:RNA endonuclease activity"/>
    <property type="evidence" value="ECO:0000314"/>
    <property type="project" value="UniProtKB"/>
</dbReference>
<dbReference type="GO" id="GO:0000049">
    <property type="term" value="F:tRNA binding"/>
    <property type="evidence" value="ECO:0000266"/>
    <property type="project" value="RGD"/>
</dbReference>
<dbReference type="GO" id="GO:0008270">
    <property type="term" value="F:zinc ion binding"/>
    <property type="evidence" value="ECO:0000314"/>
    <property type="project" value="UniProtKB"/>
</dbReference>
<dbReference type="GO" id="GO:0006338">
    <property type="term" value="P:chromatin remodeling"/>
    <property type="evidence" value="ECO:0000266"/>
    <property type="project" value="RGD"/>
</dbReference>
<dbReference type="GO" id="GO:0051607">
    <property type="term" value="P:defense response to virus"/>
    <property type="evidence" value="ECO:0000266"/>
    <property type="project" value="RGD"/>
</dbReference>
<dbReference type="GO" id="GO:0006974">
    <property type="term" value="P:DNA damage response"/>
    <property type="evidence" value="ECO:0000266"/>
    <property type="project" value="RGD"/>
</dbReference>
<dbReference type="GO" id="GO:0008156">
    <property type="term" value="P:negative regulation of DNA replication"/>
    <property type="evidence" value="ECO:0000266"/>
    <property type="project" value="RGD"/>
</dbReference>
<dbReference type="GO" id="GO:2000134">
    <property type="term" value="P:negative regulation of G1/S transition of mitotic cell cycle"/>
    <property type="evidence" value="ECO:0000266"/>
    <property type="project" value="RGD"/>
</dbReference>
<dbReference type="GO" id="GO:0043111">
    <property type="term" value="P:replication fork arrest"/>
    <property type="evidence" value="ECO:0000266"/>
    <property type="project" value="RGD"/>
</dbReference>
<dbReference type="GO" id="GO:0016075">
    <property type="term" value="P:rRNA catabolic process"/>
    <property type="evidence" value="ECO:0000314"/>
    <property type="project" value="UniProtKB"/>
</dbReference>
<dbReference type="GO" id="GO:0016078">
    <property type="term" value="P:tRNA decay"/>
    <property type="evidence" value="ECO:0000314"/>
    <property type="project" value="UniProtKB"/>
</dbReference>
<dbReference type="FunFam" id="3.40.50.300:FF:001322">
    <property type="entry name" value="Schlafen family member 11"/>
    <property type="match status" value="1"/>
</dbReference>
<dbReference type="FunFam" id="3.30.950.30:FF:000001">
    <property type="entry name" value="Schlafen family member 14"/>
    <property type="match status" value="1"/>
</dbReference>
<dbReference type="Gene3D" id="3.40.50.300">
    <property type="entry name" value="P-loop containing nucleotide triphosphate hydrolases"/>
    <property type="match status" value="1"/>
</dbReference>
<dbReference type="Gene3D" id="3.30.950.30">
    <property type="entry name" value="Schlafen, AAA domain"/>
    <property type="match status" value="1"/>
</dbReference>
<dbReference type="InterPro" id="IPR027417">
    <property type="entry name" value="P-loop_NTPase"/>
</dbReference>
<dbReference type="InterPro" id="IPR031450">
    <property type="entry name" value="Poxin-SLFN/SLFN_N"/>
</dbReference>
<dbReference type="InterPro" id="IPR029684">
    <property type="entry name" value="Schlafen"/>
</dbReference>
<dbReference type="InterPro" id="IPR007421">
    <property type="entry name" value="Schlafen_AlbA_2_dom"/>
</dbReference>
<dbReference type="InterPro" id="IPR038461">
    <property type="entry name" value="Schlafen_AlbA_2_dom_sf"/>
</dbReference>
<dbReference type="InterPro" id="IPR018647">
    <property type="entry name" value="SLFN_3-like_DNA/RNA_helicase"/>
</dbReference>
<dbReference type="InterPro" id="IPR048729">
    <property type="entry name" value="SLFN_GTPase-like"/>
</dbReference>
<dbReference type="PANTHER" id="PTHR12155">
    <property type="entry name" value="SCHLAFEN"/>
    <property type="match status" value="1"/>
</dbReference>
<dbReference type="PANTHER" id="PTHR12155:SF43">
    <property type="entry name" value="SCHLAFEN FAMILY MEMBER 13"/>
    <property type="match status" value="1"/>
</dbReference>
<dbReference type="Pfam" id="PF17057">
    <property type="entry name" value="B3R"/>
    <property type="match status" value="1"/>
</dbReference>
<dbReference type="Pfam" id="PF09848">
    <property type="entry name" value="SLFN-g3_helicase"/>
    <property type="match status" value="1"/>
</dbReference>
<dbReference type="Pfam" id="PF04326">
    <property type="entry name" value="SLFN_AlbA_2"/>
    <property type="match status" value="1"/>
</dbReference>
<dbReference type="Pfam" id="PF21026">
    <property type="entry name" value="SLFN_GTPase-like"/>
    <property type="match status" value="1"/>
</dbReference>
<dbReference type="SUPFAM" id="SSF52540">
    <property type="entry name" value="P-loop containing nucleoside triphosphate hydrolases"/>
    <property type="match status" value="1"/>
</dbReference>
<protein>
    <recommendedName>
        <fullName evidence="5">Schlafen family member 13</fullName>
        <ecNumber evidence="3">3.1.-.-</ecNumber>
    </recommendedName>
    <alternativeName>
        <fullName evidence="4">Ribonuclease S13</fullName>
        <shortName evidence="4">RNase S13</shortName>
    </alternativeName>
    <alternativeName>
        <fullName evidence="5">Schlafen-13</fullName>
        <shortName evidence="4">Schlafen13</shortName>
        <shortName evidence="4">rSLFN13</shortName>
    </alternativeName>
</protein>
<evidence type="ECO:0000250" key="1">
    <source>
        <dbReference type="UniProtKB" id="Q68D06"/>
    </source>
</evidence>
<evidence type="ECO:0000255" key="2"/>
<evidence type="ECO:0000269" key="3">
    <source>
    </source>
</evidence>
<evidence type="ECO:0000303" key="4">
    <source>
    </source>
</evidence>
<evidence type="ECO:0000305" key="5"/>
<evidence type="ECO:0000312" key="6">
    <source>
        <dbReference type="RGD" id="1359139"/>
    </source>
</evidence>
<evidence type="ECO:0007829" key="7">
    <source>
        <dbReference type="PDB" id="5YD0"/>
    </source>
</evidence>
<keyword id="KW-0002">3D-structure</keyword>
<keyword id="KW-0067">ATP-binding</keyword>
<keyword id="KW-0963">Cytoplasm</keyword>
<keyword id="KW-0255">Endonuclease</keyword>
<keyword id="KW-0378">Hydrolase</keyword>
<keyword id="KW-0460">Magnesium</keyword>
<keyword id="KW-0479">Metal-binding</keyword>
<keyword id="KW-0540">Nuclease</keyword>
<keyword id="KW-0547">Nucleotide-binding</keyword>
<keyword id="KW-1185">Reference proteome</keyword>
<keyword id="KW-0862">Zinc</keyword>
<feature type="chain" id="PRO_0000444606" description="Schlafen family member 13">
    <location>
        <begin position="1"/>
        <end position="907"/>
    </location>
</feature>
<feature type="region of interest" description="N'-domain region" evidence="4">
    <location>
        <begin position="1"/>
        <end position="353"/>
    </location>
</feature>
<feature type="active site" evidence="3">
    <location>
        <position position="205"/>
    </location>
</feature>
<feature type="active site" evidence="3">
    <location>
        <position position="210"/>
    </location>
</feature>
<feature type="binding site" evidence="3">
    <location>
        <position position="281"/>
    </location>
    <ligand>
        <name>Zn(2+)</name>
        <dbReference type="ChEBI" id="CHEBI:29105"/>
    </ligand>
</feature>
<feature type="binding site" evidence="3">
    <location>
        <position position="283"/>
    </location>
    <ligand>
        <name>Zn(2+)</name>
        <dbReference type="ChEBI" id="CHEBI:29105"/>
    </ligand>
</feature>
<feature type="binding site" evidence="3">
    <location>
        <position position="318"/>
    </location>
    <ligand>
        <name>Zn(2+)</name>
        <dbReference type="ChEBI" id="CHEBI:29105"/>
    </ligand>
</feature>
<feature type="binding site" evidence="2">
    <location>
        <begin position="604"/>
        <end position="611"/>
    </location>
    <ligand>
        <name>ATP</name>
        <dbReference type="ChEBI" id="CHEBI:30616"/>
    </ligand>
</feature>
<feature type="mutagenesis site" description="Reduced endoribonuclease activity." evidence="3">
    <original>D</original>
    <variation>A</variation>
    <location>
        <position position="34"/>
    </location>
</feature>
<feature type="mutagenesis site" description="Reduced endoribonuclease activity." evidence="3">
    <original>K</original>
    <variation>A</variation>
    <location>
        <position position="38"/>
    </location>
</feature>
<feature type="mutagenesis site" description="Reduced endoribonuclease activity." evidence="3">
    <original>R</original>
    <variation>A</variation>
    <location>
        <position position="39"/>
    </location>
</feature>
<feature type="mutagenesis site" description="Reduced endoribonuclease activity." evidence="3">
    <original>K</original>
    <variation>A</variation>
    <location>
        <position position="42"/>
    </location>
</feature>
<feature type="mutagenesis site" description="Reduced endoribonuclease activity." evidence="3">
    <original>E</original>
    <variation>A</variation>
    <location>
        <position position="47"/>
    </location>
</feature>
<feature type="mutagenesis site" description="Reduced endoribonuclease activity." evidence="3">
    <original>E</original>
    <variation>A</variation>
    <location>
        <position position="84"/>
    </location>
</feature>
<feature type="mutagenesis site" description="Reduced endoribonuclease activity." evidence="3">
    <original>E</original>
    <variation>A</variation>
    <location>
        <position position="96"/>
    </location>
</feature>
<feature type="mutagenesis site" description="Reduced endoribonuclease activity." evidence="3">
    <original>E</original>
    <variation>A</variation>
    <location>
        <position position="146"/>
    </location>
</feature>
<feature type="mutagenesis site" description="Reduced endoribonuclease activity." evidence="3">
    <original>E</original>
    <variation>A</variation>
    <location>
        <position position="193"/>
    </location>
</feature>
<feature type="mutagenesis site" description="Abolished endoribonuclease activity." evidence="3">
    <original>E</original>
    <variation>A</variation>
    <location>
        <position position="205"/>
    </location>
</feature>
<feature type="mutagenesis site" description="Abolished endoribonuclease activity." evidence="3">
    <original>E</original>
    <variation>A</variation>
    <location>
        <position position="210"/>
    </location>
</feature>
<feature type="mutagenesis site" description="Reduced endoribonuclease activity." evidence="3">
    <original>R</original>
    <variation>A</variation>
    <location>
        <position position="217"/>
    </location>
</feature>
<feature type="mutagenesis site" description="Reduced endoribonuclease activity." evidence="3">
    <original>E</original>
    <variation>A</variation>
    <location>
        <position position="221"/>
    </location>
</feature>
<feature type="mutagenesis site" description="Reduced endoribonuclease activity." evidence="3">
    <original>K</original>
    <variation>A</variation>
    <location>
        <position position="224"/>
    </location>
</feature>
<feature type="mutagenesis site" description="Reduced endoribonuclease activity." evidence="3">
    <original>E</original>
    <variation>A</variation>
    <location>
        <position position="229"/>
    </location>
</feature>
<feature type="mutagenesis site" description="Reduced endoribonuclease activity." evidence="3">
    <original>E</original>
    <variation>A</variation>
    <location>
        <position position="249"/>
    </location>
</feature>
<feature type="mutagenesis site" description="Reduced endoribonuclease activity." evidence="3">
    <original>D</original>
    <variation>A</variation>
    <location>
        <position position="259"/>
    </location>
</feature>
<feature type="mutagenesis site" description="Reduced endoribonuclease activity." evidence="3">
    <original>K</original>
    <variation>A</variation>
    <location>
        <position position="276"/>
    </location>
</feature>
<feature type="mutagenesis site" description="Renders the protein insoluble." evidence="3">
    <original>H</original>
    <variation>A</variation>
    <location>
        <position position="281"/>
    </location>
</feature>
<feature type="mutagenesis site" description="Renders the protein insoluble." evidence="3">
    <original>C</original>
    <variation>A</variation>
    <location>
        <position position="283"/>
    </location>
</feature>
<feature type="mutagenesis site" description="Renders the protein insoluble." evidence="3">
    <original>C</original>
    <variation>A</variation>
    <location>
        <position position="318"/>
    </location>
</feature>
<feature type="mutagenesis site" description="Reduced endoribonuclease activity." evidence="3">
    <original>E</original>
    <variation>A</variation>
    <location>
        <position position="323"/>
    </location>
</feature>
<feature type="strand" evidence="7">
    <location>
        <begin position="17"/>
        <end position="23"/>
    </location>
</feature>
<feature type="helix" evidence="7">
    <location>
        <begin position="27"/>
        <end position="31"/>
    </location>
</feature>
<feature type="helix" evidence="7">
    <location>
        <begin position="35"/>
        <end position="53"/>
    </location>
</feature>
<feature type="turn" evidence="7">
    <location>
        <begin position="54"/>
        <end position="56"/>
    </location>
</feature>
<feature type="strand" evidence="7">
    <location>
        <begin position="58"/>
        <end position="66"/>
    </location>
</feature>
<feature type="helix" evidence="7">
    <location>
        <begin position="67"/>
        <end position="69"/>
    </location>
</feature>
<feature type="helix" evidence="7">
    <location>
        <begin position="76"/>
        <end position="85"/>
    </location>
</feature>
<feature type="helix" evidence="7">
    <location>
        <begin position="91"/>
        <end position="93"/>
    </location>
</feature>
<feature type="strand" evidence="7">
    <location>
        <begin position="95"/>
        <end position="100"/>
    </location>
</feature>
<feature type="strand" evidence="7">
    <location>
        <begin position="103"/>
        <end position="108"/>
    </location>
</feature>
<feature type="helix" evidence="7">
    <location>
        <begin position="144"/>
        <end position="158"/>
    </location>
</feature>
<feature type="helix" evidence="7">
    <location>
        <begin position="180"/>
        <end position="183"/>
    </location>
</feature>
<feature type="helix" evidence="7">
    <location>
        <begin position="187"/>
        <end position="190"/>
    </location>
</feature>
<feature type="strand" evidence="7">
    <location>
        <begin position="193"/>
        <end position="196"/>
    </location>
</feature>
<feature type="strand" evidence="7">
    <location>
        <begin position="207"/>
        <end position="212"/>
    </location>
</feature>
<feature type="helix" evidence="7">
    <location>
        <begin position="219"/>
        <end position="236"/>
    </location>
</feature>
<feature type="strand" evidence="7">
    <location>
        <begin position="240"/>
        <end position="246"/>
    </location>
</feature>
<feature type="strand" evidence="7">
    <location>
        <begin position="248"/>
        <end position="250"/>
    </location>
</feature>
<feature type="strand" evidence="7">
    <location>
        <begin position="256"/>
        <end position="258"/>
    </location>
</feature>
<feature type="helix" evidence="7">
    <location>
        <begin position="263"/>
        <end position="275"/>
    </location>
</feature>
<feature type="strand" evidence="7">
    <location>
        <begin position="282"/>
        <end position="284"/>
    </location>
</feature>
<feature type="strand" evidence="7">
    <location>
        <begin position="291"/>
        <end position="313"/>
    </location>
</feature>
<feature type="strand" evidence="7">
    <location>
        <begin position="317"/>
        <end position="320"/>
    </location>
</feature>
<feature type="strand" evidence="7">
    <location>
        <begin position="322"/>
        <end position="324"/>
    </location>
</feature>
<feature type="strand" evidence="7">
    <location>
        <begin position="328"/>
        <end position="331"/>
    </location>
</feature>
<feature type="turn" evidence="7">
    <location>
        <begin position="332"/>
        <end position="334"/>
    </location>
</feature>
<feature type="strand" evidence="7">
    <location>
        <begin position="335"/>
        <end position="338"/>
    </location>
</feature>
<feature type="helix" evidence="7">
    <location>
        <begin position="341"/>
        <end position="348"/>
    </location>
</feature>
<accession>Q5U311</accession>
<accession>A0A096MJD4</accession>
<accession>A0A096MKD0</accession>
<proteinExistence type="evidence at protein level"/>
<gene>
    <name evidence="6" type="primary">Slfn13</name>
</gene>
<reference key="1">
    <citation type="journal article" date="2004" name="Nature">
        <title>Genome sequence of the Brown Norway rat yields insights into mammalian evolution.</title>
        <authorList>
            <person name="Gibbs R.A."/>
            <person name="Weinstock G.M."/>
            <person name="Metzker M.L."/>
            <person name="Muzny D.M."/>
            <person name="Sodergren E.J."/>
            <person name="Scherer S."/>
            <person name="Scott G."/>
            <person name="Steffen D."/>
            <person name="Worley K.C."/>
            <person name="Burch P.E."/>
            <person name="Okwuonu G."/>
            <person name="Hines S."/>
            <person name="Lewis L."/>
            <person name="Deramo C."/>
            <person name="Delgado O."/>
            <person name="Dugan-Rocha S."/>
            <person name="Miner G."/>
            <person name="Morgan M."/>
            <person name="Hawes A."/>
            <person name="Gill R."/>
            <person name="Holt R.A."/>
            <person name="Adams M.D."/>
            <person name="Amanatides P.G."/>
            <person name="Baden-Tillson H."/>
            <person name="Barnstead M."/>
            <person name="Chin S."/>
            <person name="Evans C.A."/>
            <person name="Ferriera S."/>
            <person name="Fosler C."/>
            <person name="Glodek A."/>
            <person name="Gu Z."/>
            <person name="Jennings D."/>
            <person name="Kraft C.L."/>
            <person name="Nguyen T."/>
            <person name="Pfannkoch C.M."/>
            <person name="Sitter C."/>
            <person name="Sutton G.G."/>
            <person name="Venter J.C."/>
            <person name="Woodage T."/>
            <person name="Smith D."/>
            <person name="Lee H.-M."/>
            <person name="Gustafson E."/>
            <person name="Cahill P."/>
            <person name="Kana A."/>
            <person name="Doucette-Stamm L."/>
            <person name="Weinstock K."/>
            <person name="Fechtel K."/>
            <person name="Weiss R.B."/>
            <person name="Dunn D.M."/>
            <person name="Green E.D."/>
            <person name="Blakesley R.W."/>
            <person name="Bouffard G.G."/>
            <person name="De Jong P.J."/>
            <person name="Osoegawa K."/>
            <person name="Zhu B."/>
            <person name="Marra M."/>
            <person name="Schein J."/>
            <person name="Bosdet I."/>
            <person name="Fjell C."/>
            <person name="Jones S."/>
            <person name="Krzywinski M."/>
            <person name="Mathewson C."/>
            <person name="Siddiqui A."/>
            <person name="Wye N."/>
            <person name="McPherson J."/>
            <person name="Zhao S."/>
            <person name="Fraser C.M."/>
            <person name="Shetty J."/>
            <person name="Shatsman S."/>
            <person name="Geer K."/>
            <person name="Chen Y."/>
            <person name="Abramzon S."/>
            <person name="Nierman W.C."/>
            <person name="Havlak P.H."/>
            <person name="Chen R."/>
            <person name="Durbin K.J."/>
            <person name="Egan A."/>
            <person name="Ren Y."/>
            <person name="Song X.-Z."/>
            <person name="Li B."/>
            <person name="Liu Y."/>
            <person name="Qin X."/>
            <person name="Cawley S."/>
            <person name="Cooney A.J."/>
            <person name="D'Souza L.M."/>
            <person name="Martin K."/>
            <person name="Wu J.Q."/>
            <person name="Gonzalez-Garay M.L."/>
            <person name="Jackson A.R."/>
            <person name="Kalafus K.J."/>
            <person name="McLeod M.P."/>
            <person name="Milosavljevic A."/>
            <person name="Virk D."/>
            <person name="Volkov A."/>
            <person name="Wheeler D.A."/>
            <person name="Zhang Z."/>
            <person name="Bailey J.A."/>
            <person name="Eichler E.E."/>
            <person name="Tuzun E."/>
            <person name="Birney E."/>
            <person name="Mongin E."/>
            <person name="Ureta-Vidal A."/>
            <person name="Woodwark C."/>
            <person name="Zdobnov E."/>
            <person name="Bork P."/>
            <person name="Suyama M."/>
            <person name="Torrents D."/>
            <person name="Alexandersson M."/>
            <person name="Trask B.J."/>
            <person name="Young J.M."/>
            <person name="Huang H."/>
            <person name="Wang H."/>
            <person name="Xing H."/>
            <person name="Daniels S."/>
            <person name="Gietzen D."/>
            <person name="Schmidt J."/>
            <person name="Stevens K."/>
            <person name="Vitt U."/>
            <person name="Wingrove J."/>
            <person name="Camara F."/>
            <person name="Mar Alba M."/>
            <person name="Abril J.F."/>
            <person name="Guigo R."/>
            <person name="Smit A."/>
            <person name="Dubchak I."/>
            <person name="Rubin E.M."/>
            <person name="Couronne O."/>
            <person name="Poliakov A."/>
            <person name="Huebner N."/>
            <person name="Ganten D."/>
            <person name="Goesele C."/>
            <person name="Hummel O."/>
            <person name="Kreitler T."/>
            <person name="Lee Y.-A."/>
            <person name="Monti J."/>
            <person name="Schulz H."/>
            <person name="Zimdahl H."/>
            <person name="Himmelbauer H."/>
            <person name="Lehrach H."/>
            <person name="Jacob H.J."/>
            <person name="Bromberg S."/>
            <person name="Gullings-Handley J."/>
            <person name="Jensen-Seaman M.I."/>
            <person name="Kwitek A.E."/>
            <person name="Lazar J."/>
            <person name="Pasko D."/>
            <person name="Tonellato P.J."/>
            <person name="Twigger S."/>
            <person name="Ponting C.P."/>
            <person name="Duarte J.M."/>
            <person name="Rice S."/>
            <person name="Goodstadt L."/>
            <person name="Beatson S.A."/>
            <person name="Emes R.D."/>
            <person name="Winter E.E."/>
            <person name="Webber C."/>
            <person name="Brandt P."/>
            <person name="Nyakatura G."/>
            <person name="Adetobi M."/>
            <person name="Chiaromonte F."/>
            <person name="Elnitski L."/>
            <person name="Eswara P."/>
            <person name="Hardison R.C."/>
            <person name="Hou M."/>
            <person name="Kolbe D."/>
            <person name="Makova K."/>
            <person name="Miller W."/>
            <person name="Nekrutenko A."/>
            <person name="Riemer C."/>
            <person name="Schwartz S."/>
            <person name="Taylor J."/>
            <person name="Yang S."/>
            <person name="Zhang Y."/>
            <person name="Lindpaintner K."/>
            <person name="Andrews T.D."/>
            <person name="Caccamo M."/>
            <person name="Clamp M."/>
            <person name="Clarke L."/>
            <person name="Curwen V."/>
            <person name="Durbin R.M."/>
            <person name="Eyras E."/>
            <person name="Searle S.M."/>
            <person name="Cooper G.M."/>
            <person name="Batzoglou S."/>
            <person name="Brudno M."/>
            <person name="Sidow A."/>
            <person name="Stone E.A."/>
            <person name="Payseur B.A."/>
            <person name="Bourque G."/>
            <person name="Lopez-Otin C."/>
            <person name="Puente X.S."/>
            <person name="Chakrabarti K."/>
            <person name="Chatterji S."/>
            <person name="Dewey C."/>
            <person name="Pachter L."/>
            <person name="Bray N."/>
            <person name="Yap V.B."/>
            <person name="Caspi A."/>
            <person name="Tesler G."/>
            <person name="Pevzner P.A."/>
            <person name="Haussler D."/>
            <person name="Roskin K.M."/>
            <person name="Baertsch R."/>
            <person name="Clawson H."/>
            <person name="Furey T.S."/>
            <person name="Hinrichs A.S."/>
            <person name="Karolchik D."/>
            <person name="Kent W.J."/>
            <person name="Rosenbloom K.R."/>
            <person name="Trumbower H."/>
            <person name="Weirauch M."/>
            <person name="Cooper D.N."/>
            <person name="Stenson P.D."/>
            <person name="Ma B."/>
            <person name="Brent M."/>
            <person name="Arumugam M."/>
            <person name="Shteynberg D."/>
            <person name="Copley R.R."/>
            <person name="Taylor M.S."/>
            <person name="Riethman H."/>
            <person name="Mudunuri U."/>
            <person name="Peterson J."/>
            <person name="Guyer M."/>
            <person name="Felsenfeld A."/>
            <person name="Old S."/>
            <person name="Mockrin S."/>
            <person name="Collins F.S."/>
        </authorList>
    </citation>
    <scope>NUCLEOTIDE SEQUENCE [LARGE SCALE GENOMIC DNA]</scope>
    <source>
        <strain>Brown Norway</strain>
    </source>
</reference>
<reference key="2">
    <citation type="journal article" date="2004" name="Genome Res.">
        <title>The status, quality, and expansion of the NIH full-length cDNA project: the Mammalian Gene Collection (MGC).</title>
        <authorList>
            <consortium name="The MGC Project Team"/>
        </authorList>
    </citation>
    <scope>NUCLEOTIDE SEQUENCE [LARGE SCALE MRNA]</scope>
    <source>
        <tissue>Kidney</tissue>
    </source>
</reference>
<reference key="3">
    <citation type="journal article" date="2018" name="Nat. Commun.">
        <title>Structure of Schlafen13 reveals a new class of tRNA/rRNA- targeting RNase engaged in translational control.</title>
        <authorList>
            <person name="Yang J.Y."/>
            <person name="Deng X.Y."/>
            <person name="Li Y.S."/>
            <person name="Ma X.C."/>
            <person name="Feng J.X."/>
            <person name="Yu B."/>
            <person name="Chen Y."/>
            <person name="Luo Y.L."/>
            <person name="Wang X."/>
            <person name="Chen M.L."/>
            <person name="Fang Z.X."/>
            <person name="Zheng F.X."/>
            <person name="Li Y.P."/>
            <person name="Zhong Q."/>
            <person name="Kang T.B."/>
            <person name="Song L.B."/>
            <person name="Xu R.H."/>
            <person name="Zeng M.S."/>
            <person name="Chen W."/>
            <person name="Zhang H."/>
            <person name="Xie W."/>
            <person name="Gao S."/>
        </authorList>
    </citation>
    <scope>X-RAY CRYSTALLOGRAPHY (3.18 ANGSTROMS) OF 14-353 IN COMPLEX WITH ZINC</scope>
    <scope>FUNCTION</scope>
    <scope>COFACTOR</scope>
    <scope>DOMAIN</scope>
    <scope>ACTIVE SITE</scope>
    <scope>MUTAGENESIS OF ASP-34; LYS-38; ARG-39; LYS-42; GLU-47; GLU-84; GLU-96; GLU-146; GLU-193; GLU-205; GLU-210; ARG-217; GLU-221; LYS-224; GLU-229; GLU-249; ASP-259; LYS-276; HIS-281; CYS-283; CYS-318 AND GLU-323</scope>
</reference>
<name>SLN13_RAT</name>
<sequence>MEIHPSLVVEPSYPDLIIHAGEVTLGEKDRNKMDSKKKRLEKARITEAACALLNSGGGVIVMQMSNKSEHPVEMGLDLETSLRELIPSSDLQAFIETKQQGDLFYIFVKSWSCSPKDGSTKPRICSLSSSLYCRSLTSKLPLDSKETFEFLERKKTCVKGSLTDGKGPPAKIPRLMYQNDLESNPAFEIFQSERLEYGQRLPFSESASIEFKQFSTRRAHEYIKSVIPEYISAFANTQGGYLLFGVDDESKRVLGCPKDNVDRDSLKAVVNEAISKLPVFHFCSSKEKVSYKTRVIDVFKEGNLYGYLCVIKVERFCCAVFSEAPISWMADKENGVYSLNTEKWVRMMVDIGPEAASSKQSSLDDLSKDFECQLSLSNSPPHCRPVYSKKGLEHKGDLQKRLFQVSADCFKYTPESLWRELCSQHERLENLISQQMCSFSCGLLILSRSWAVDLNLEGKQGVICDALLIAENSPPTLYTILEEQDELGQDYCTRTAFTLKQKLVNTGGYTGRVCVMTKVLCLSSQNNIETNGNSVSLIDYPRSYNLANIQEMEDLLQALVIVLLNFSSFLSDQLGCEILNLLTVQQYEILSKSLHKTRKLFVHGMPGSGKTIIAMKIMEKIKNTFHCERDSILYICENQLLRDFIRAKNVCRAVTRKTFMTPNFEVEKIQHIIVDEAQNFRTENGDWYMKAKRITQRMKTCPQIFWIFLDYFQTSHQKESGLPDFLHQYPKEELTKVVRNADKIAEFLQKISEKIRSNPPPIIPRESLNMVCEFNWSQGVSGTCKLLTSLGLEQMARYVAERCYFFLKNGYSAQDIAVLFSTEDEKDNNEDMFLREIRNRTSQIDDAYHLYMFDSIRRFSGLERSIVFGIDPRTAEKSIFHNLMLCLASRARKHLYILSKVPNPFNF</sequence>
<comment type="function">
    <text evidence="3">Endoribonuclease that cleaves tRNAs and rRNAs (PubMed:29563550). Cleaves tRNAs 11 nucleotides from the 3'-terminus at the acceptor stem (PubMed:29563550). Does not act on tRNA(Sec) (PubMed:29563550).</text>
</comment>
<comment type="cofactor">
    <cofactor evidence="3">
        <name>Mg(2+)</name>
        <dbReference type="ChEBI" id="CHEBI:18420"/>
    </cofactor>
    <text evidence="3">Can also use Mn(2+).</text>
</comment>
<comment type="subcellular location">
    <subcellularLocation>
        <location evidence="1">Cytoplasm</location>
    </subcellularLocation>
</comment>
<comment type="domain">
    <text evidence="3">Shows a pseudo-dimeric U-pillow-shaped architecture of the SLFN13 N'-domain that may clamp base-paired RNAs.</text>
</comment>
<comment type="similarity">
    <text evidence="5">Belongs to the Schlafen family. Subgroup III subfamily.</text>
</comment>